<gene>
    <name evidence="8" type="primary">himA</name>
</gene>
<organism>
    <name type="scientific">Aspergillus japonicus</name>
    <dbReference type="NCBI Taxonomy" id="34381"/>
    <lineage>
        <taxon>Eukaryota</taxon>
        <taxon>Fungi</taxon>
        <taxon>Dikarya</taxon>
        <taxon>Ascomycota</taxon>
        <taxon>Pezizomycotina</taxon>
        <taxon>Eurotiomycetes</taxon>
        <taxon>Eurotiomycetidae</taxon>
        <taxon>Eurotiales</taxon>
        <taxon>Aspergillaceae</taxon>
        <taxon>Aspergillus</taxon>
        <taxon>Aspergillus subgen. Circumdati</taxon>
    </lineage>
</organism>
<reference key="1">
    <citation type="journal article" date="2018" name="ChemBioChem">
        <title>Identification of the biosynthetic gene cluster for himeic acid A: a ubiquitin-activating enzyme (E1) inhibitor in Aspergillus japonicus MF275.</title>
        <authorList>
            <person name="Hashimoto M."/>
            <person name="Kato H."/>
            <person name="Katsuki A."/>
            <person name="Tsukamoto S."/>
            <person name="Fujii I."/>
        </authorList>
    </citation>
    <scope>NUCLEOTIDE SEQUENCE [GENOMIC DNA]</scope>
    <scope>DISRUPTION PHENOTYPE</scope>
    <scope>FUNCTION</scope>
    <scope>PATHWAY</scope>
    <source>
        <strain>MF275</strain>
    </source>
</reference>
<reference key="2">
    <citation type="journal article" date="2018" name="Bioorg. Med. Chem.">
        <title>pH-dependent production of himeic acid A and its non-enzymatic conversions to himeic acids B and C.</title>
        <authorList>
            <person name="Katsuki A."/>
            <person name="Kato H."/>
            <person name="Tahara Y."/>
            <person name="Hashimoto M."/>
            <person name="Fujii I."/>
            <person name="Tsukamoto S."/>
        </authorList>
    </citation>
    <scope>FUNCTION</scope>
</reference>
<proteinExistence type="inferred from homology"/>
<evidence type="ECO:0000255" key="1"/>
<evidence type="ECO:0000255" key="2">
    <source>
        <dbReference type="PROSITE-ProRule" id="PRU00258"/>
    </source>
</evidence>
<evidence type="ECO:0000255" key="3">
    <source>
        <dbReference type="PROSITE-ProRule" id="PRU01348"/>
    </source>
</evidence>
<evidence type="ECO:0000255" key="4">
    <source>
        <dbReference type="PROSITE-ProRule" id="PRU01363"/>
    </source>
</evidence>
<evidence type="ECO:0000256" key="5">
    <source>
        <dbReference type="SAM" id="MobiDB-lite"/>
    </source>
</evidence>
<evidence type="ECO:0000269" key="6">
    <source>
    </source>
</evidence>
<evidence type="ECO:0000269" key="7">
    <source>
    </source>
</evidence>
<evidence type="ECO:0000303" key="8">
    <source>
    </source>
</evidence>
<evidence type="ECO:0000305" key="9"/>
<evidence type="ECO:0000305" key="10">
    <source>
    </source>
</evidence>
<protein>
    <recommendedName>
        <fullName evidence="8">Polyketide synthase-nonribosomal peptide synthetase hybrid himA</fullName>
        <shortName evidence="8">PKS-NRPS hybrid synthetase himA</shortName>
        <ecNumber evidence="10">2.3.1.-</ecNumber>
        <ecNumber evidence="10">6.3.2.-</ecNumber>
    </recommendedName>
    <alternativeName>
        <fullName evidence="8">Himeic acid biosynthesis cluster protein A</fullName>
    </alternativeName>
</protein>
<accession>A0A2Z5TM64</accession>
<keyword id="KW-0436">Ligase</keyword>
<keyword id="KW-0511">Multifunctional enzyme</keyword>
<keyword id="KW-0596">Phosphopantetheine</keyword>
<keyword id="KW-0597">Phosphoprotein</keyword>
<keyword id="KW-0677">Repeat</keyword>
<keyword id="KW-0808">Transferase</keyword>
<feature type="chain" id="PRO_0000445952" description="Polyketide synthase-nonribosomal peptide synthetase hybrid himA">
    <location>
        <begin position="1"/>
        <end position="3970"/>
    </location>
</feature>
<feature type="domain" description="Ketosynthase family 3 (KS3)" evidence="3 10">
    <location>
        <begin position="8"/>
        <end position="443"/>
    </location>
</feature>
<feature type="domain" description="PKS/mFAS DH" evidence="4">
    <location>
        <begin position="949"/>
        <end position="1256"/>
    </location>
</feature>
<feature type="domain" description="Carrier 1" evidence="2 10">
    <location>
        <begin position="2342"/>
        <end position="2419"/>
    </location>
</feature>
<feature type="domain" description="Carrier 2" evidence="2 10">
    <location>
        <begin position="3496"/>
        <end position="3574"/>
    </location>
</feature>
<feature type="region of interest" description="Malonyl-CoA:ACP transacylase (MAT) domain" evidence="1 10">
    <location>
        <begin position="561"/>
        <end position="876"/>
    </location>
</feature>
<feature type="region of interest" description="Dehydratase (DH) domain" evidence="1 10">
    <location>
        <begin position="949"/>
        <end position="1253"/>
    </location>
</feature>
<feature type="region of interest" description="N-terminal hotdog fold" evidence="4">
    <location>
        <begin position="949"/>
        <end position="1083"/>
    </location>
</feature>
<feature type="region of interest" description="C-terminal hotdog fold" evidence="4">
    <location>
        <begin position="1098"/>
        <end position="1256"/>
    </location>
</feature>
<feature type="region of interest" description="Ketoreductase (KR) domain" evidence="1 10">
    <location>
        <begin position="2060"/>
        <end position="2234"/>
    </location>
</feature>
<feature type="region of interest" description="Disordered" evidence="5">
    <location>
        <begin position="2420"/>
        <end position="2482"/>
    </location>
</feature>
<feature type="region of interest" description="Condensation (C) domain" evidence="1 10">
    <location>
        <begin position="2487"/>
        <end position="2919"/>
    </location>
</feature>
<feature type="region of interest" description="Adenylation (A) domain" evidence="1 10">
    <location>
        <begin position="2974"/>
        <end position="3381"/>
    </location>
</feature>
<feature type="region of interest" description="Disordered" evidence="5">
    <location>
        <begin position="3466"/>
        <end position="3495"/>
    </location>
</feature>
<feature type="region of interest" description="Reductase (R) domain" evidence="1 10">
    <location>
        <begin position="3633"/>
        <end position="3866"/>
    </location>
</feature>
<feature type="compositionally biased region" description="Low complexity" evidence="5">
    <location>
        <begin position="2445"/>
        <end position="2466"/>
    </location>
</feature>
<feature type="compositionally biased region" description="Acidic residues" evidence="5">
    <location>
        <begin position="2467"/>
        <end position="2477"/>
    </location>
</feature>
<feature type="compositionally biased region" description="Acidic residues" evidence="5">
    <location>
        <begin position="3472"/>
        <end position="3492"/>
    </location>
</feature>
<feature type="active site" description="For beta-ketoacyl synthase activity" evidence="3">
    <location>
        <position position="181"/>
    </location>
</feature>
<feature type="active site" description="For beta-ketoacyl synthase activity" evidence="3">
    <location>
        <position position="320"/>
    </location>
</feature>
<feature type="active site" description="For beta-ketoacyl synthase activity" evidence="3">
    <location>
        <position position="363"/>
    </location>
</feature>
<feature type="active site" description="Proton acceptor; for dehydratase activity" evidence="4">
    <location>
        <position position="981"/>
    </location>
</feature>
<feature type="active site" description="Proton donor; for dehydratase activity" evidence="4">
    <location>
        <position position="1158"/>
    </location>
</feature>
<feature type="modified residue" description="O-(pantetheine 4'-phosphoryl)serine" evidence="2">
    <location>
        <position position="2379"/>
    </location>
</feature>
<feature type="modified residue" description="O-(pantetheine 4'-phosphoryl)serine" evidence="2">
    <location>
        <position position="3534"/>
    </location>
</feature>
<sequence>MAYIPSSSEPIAIIGSACRFPGHSTSPSRLWELLRNPYDLTKQVPEGRFNVDGFHHPDGEHHGTTNAPNGYWLEEDPRRFDSTFFNITPKEAEAIDPQGKVLLEAVYEGLESAGLTLEGCSGSQVGVYVGTMTADYDILTGKDELTFSQYCATGTSRAIISNRVSYFFHWNGPSMTIDTACSSSLVAMHQAVLGLRSGESTMACVAGANLMLSPEPFICESSLHMLSPDGKSKMWDQSADGYARGEGVGVVFLKTLSRALADGDHIECIVRETGVNSDGRTKGITMPSSLAQAALIQDTYRRSGLDALNPDHRCQYFEAHGTGTQAGDPTEAEAIYKAFFGEDEELQEDGSILVGSIKTIIGHTEGAAGVAGVLKAALALKHAQVPPNQHLKSMNPRVVPFTRRLHVPNTLIPWPSVRPGHPLRASVNSFGFGGTNSHAILESYVPAIHGGHLAASIEKPIEHPPGFPLVLSANSAEALKDKVEQYIELLESEPEIDLQDLAWTLATRRSELPYRVSFSPVAGRERLLQEMRERLQTTEGNSSLGVRSKTVNHERGRILGIFTGQGAQWPQMGQQLIQRSPRFKEVIQSLDAVLRSCPDPPAWSIAHELLAPPTSSRLSEAALSQPLCTAVQIALVDILHEAGVELAAAVGHSSGEIAAAYAAGILTAPDAILIAYYRGFHAGLAQGPEGCRGGMMAVGMGVNEALEFCEQPAFLHHLHIAASNSPASVTISGDLEPLKQAKALLDERGTFARLLKVDTAYHSHHMDRCAAPYLQSLQAANIAPLSLTRSCVWVSSVYGPSGAPTLRELSGRYWKDNMVQPVFFTEAVTRALTEEGPFDMALEIGPHPALQGPAVQTMQEVNGSALPYAGLLHRGRDDLASVISTMGLIWSLLGSSSIDFDALSVALGNERSDCRVVKDLPSYPWDHTHMYHRQPRMAKQYLNRPARPHELLGVRTSDDTESEWRWRNLLKPSTLPWLKDHRFQDQIIVPAAAYCVMAFEAARALTTKPVKLVEIQNLSIKRGITMSDDSQGVETIFMLRKEPTVPGEGVISASFILDFVPGDADAQGTNAVKGMVHLHLGEPSAETLPRRSLPPPSGLNRVDLDEFYGSIKDIGLGYTGPFRAMTSLQRRLDFATGTLPKPHPAETSTLPVAPSLLDACFQAAFAAYAAPGDGSLWTSFLPQEIQNIRFNLDLCPVNPGPAATVNVDAVITQFSSASPESPANFSGDICVFNANGNMEVQVEGLTVVALSSTGPANDCELFIETVYKPDPYTGIVEARTEGINEEYVALQRACMRIADHFLHPNRTAGKPQQTPEAMQTGLADSPFRGYLELLISCGRTAPSRLPTAITEILMHFNEQSALQSHIRASVSQISHRFPQLRVLEITLGELQKYVTDAVVAGLAAPFHSYSHLFETTEKDAPSLLSAQTSIQDSRFRLLAFDKTALLSEQFPDETFDLVILSDGNRKNATLTSQLDGVHQLLAPGGYVFCVHSTGIPLQDRLLNPQKHHQSLSLQTLLRATPRVQGDFDLISSWTSPLRTIALSIRQSMSADVRHLIMPLTATDVSYMSDTVLLIGGETGETAQLSYQLAAILRDKSLEVVTAPRLEDVVSTSMGTVKAVIVLSDLDKPVLSSVNSSEFTALKQILVPNMSVLWLTSGFRDDQPYHYGTVGLFRSIRTETPQLKLQILDVAHISGAETVIAECFLRLITYLDSESTPLWTSEPELVWDGQHLLIPRVLPIDDLNRRYNSTRRVVHNYQNASLQVVQVVARWNGDRYTHHAVEATPSKASAPADEHFVNLRVLYSSAWAIEIKKGFHAFVSVATDSASRHLLALSPTNSSLITIPATHVHALPATGLDLSALLNRIVATLLAQSLLRQASPGGLLVHEADSFFADTLQRLNDEVRLLCFSTTDLALDDNRFIRLHPLSTKDATKAAVPSSRISSVADFSLGLTPTALVGLKSSTCMLIKAMDSLVKTEASILDNGNALSTAQDALLVVRWVVETALEELGSTRKPHTTTRVSDVLDKGLQPLGAVLDWTENVHVPLRVNRFDPGSQMRGNKTYVMIGLTGELGQSLCQFMVSHGARHLVVASRNPDKSPAWKTDLEKQGATIQVLSVDVTNVDAVRQLRVDLETSMPPVGGIVNGAMVLSDGLFADMPVESLQKALAPKVLGSQNLHDVFSDVDLDFFVMFSSLTGVPGNQGQSNYTAANMFMAGLAAQRRKAGQAASVLDIGMVSGIGYINRTDGAKIYANLKRQGYMPISERDIHGMFIEAIHCGRPTSTTGAQLTTGLQRFGVEGEEPLYWHTDPRFSHHRVLRNAVHKSTVSSSVESLKSRISEVQSQTAIAAILTESFASHVEAMLHLDPGSLDKETAIINLGVDSLMAVEIRSWFLAEVEKDMPVLKVLGGSSVATLAEEVAKELFEDRSTSAPPPMDLDKNSFDLGSVHGSSTDPSSNSDSKSGFDGFSSDDSSDIANDDSDPTAQCDQIEPMSLSQARMWLPYLMLQDKTAYNCTTSYRLIGQLDIPRFERALRSLLQSHQAFRTLFYTDHETGEAMQAIVPTSSTFSLRKVGSANDSSDVKVEHDRVAQHVYELERGDSFIATLVTHRPDYHTVIFGYHHIILDGVSWQIFLQELDRFYADPQRRPSLGVDFLDFSTRQHHDLTSIPSLSKRQFWKMTFASGSLPESLPLFPFAKAPARMPLTQYRVTEYFVELDRSLAAKIRSASTTNQTTAFHFYLSVFSVMMYRMLGVTDLCIGMTDANRNDQAFLETIGLLLDMLPLRFRLDKTPSDESAFADHLRATRDIVYSALGNSGVPLETILQDIGAESSATELPLFQAVVNYRMGAIKHKSIGDLGLEYLSYEDAGHPFDFILTIDEDEGRAGLTLSMQDYLYDRAGANIFLDSYIHLLEFFATTPTERVATPPAFAPALERTAIELGTGPRLSDPWEEPTLVHRIDHMAAKYPSDVALGDERGSLSYKAMSDRVNAIATQLLAVGAQVSTRVAVFGTPSTDNICSLLAILRIGAIYVPCDVRSADERLRTILTESEATVVIVNRETSSRFAKFHPDTVQAVIQLATVPIQSSPVHNAATAAGLAFIMFTSGSTGTPKGIQLTHANFLTHVQAASAYMQLGREVVLQQSAASYDASLAQIFYALANGGRLVVADNLRDTVALASILEKEAVTFTLMAPSEYLLLMEYTGDILARCSEWKVAMCGGEAFPPRLKGDFGRLGHGELSVYNAYGPTEIAVASNIGEVAIPRKEAAGESNDGDESHVPIGSALPEYNVYLVNEDIEPVPLGCPGQIAVAGPAVSAGYLKNEPLTSDKFPLVGERFHPEKSTRVYLTGDLARMLSNGSMVYLGRIESDTQIKLRGIRVELGDIANAILKTSRGVIANAAVGVRNPGPDQFLVAYVVLSGEKGTKRPANVRQYLDQLLVDLPLPQAMKPAVAVDVGSSLPMTSSGKLDMRALNARPLPASGDEDGDEDTETETGADADADAGADTTLSDIHSKLREIWNRALGGHTSIPITPSSNFFAVGGSSLSLLKMQALVQREFDLRIALPELFRTSTFGAIAERILRGVSAGFTEEEVEDTVPSSSPVDIIDWKKETALSETLRSLASSSQSDTRSPPMRRRPLTVILTGATGFLGRAIARALQARDDVLHIHCIAVRNPHSSAALELERTCDKVILHAGDLALPFLGMMEEEARLVFEEADVIVHNGADVSFLKSYQTLRGPNLRATQTLVEMTAHRQVPFHFVSTAGVATTLSEGSSPVIDEISLANHPPPTSRTGDAVLIDGYVASKWASETFLEHVHAQLALPVRIYRPSSITGADAPALDVMHNVLNLSRRMRALPDLGTWTGYFDFIRVETVAEEIAAGVTASPTPTATTPTPSGVEFIHLSGEKLIPVAEARKHLERETGYAFRTLEMAEWCREAAGYGLPALVAGYLESLEGQALSFPRLRSRIAEWGGGGREVVAV</sequence>
<dbReference type="EC" id="2.3.1.-" evidence="10"/>
<dbReference type="EC" id="6.3.2.-" evidence="10"/>
<dbReference type="EMBL" id="LC331673">
    <property type="protein sequence ID" value="BBA91557.1"/>
    <property type="molecule type" value="Genomic_DNA"/>
</dbReference>
<dbReference type="SMR" id="A0A2Z5TM64"/>
<dbReference type="GO" id="GO:0005737">
    <property type="term" value="C:cytoplasm"/>
    <property type="evidence" value="ECO:0007669"/>
    <property type="project" value="TreeGrafter"/>
</dbReference>
<dbReference type="GO" id="GO:0005886">
    <property type="term" value="C:plasma membrane"/>
    <property type="evidence" value="ECO:0007669"/>
    <property type="project" value="TreeGrafter"/>
</dbReference>
<dbReference type="GO" id="GO:0004315">
    <property type="term" value="F:3-oxoacyl-[acyl-carrier-protein] synthase activity"/>
    <property type="evidence" value="ECO:0007669"/>
    <property type="project" value="InterPro"/>
</dbReference>
<dbReference type="GO" id="GO:0004312">
    <property type="term" value="F:fatty acid synthase activity"/>
    <property type="evidence" value="ECO:0007669"/>
    <property type="project" value="TreeGrafter"/>
</dbReference>
<dbReference type="GO" id="GO:0016874">
    <property type="term" value="F:ligase activity"/>
    <property type="evidence" value="ECO:0007669"/>
    <property type="project" value="UniProtKB-KW"/>
</dbReference>
<dbReference type="GO" id="GO:0031177">
    <property type="term" value="F:phosphopantetheine binding"/>
    <property type="evidence" value="ECO:0007669"/>
    <property type="project" value="InterPro"/>
</dbReference>
<dbReference type="GO" id="GO:0006633">
    <property type="term" value="P:fatty acid biosynthetic process"/>
    <property type="evidence" value="ECO:0007669"/>
    <property type="project" value="InterPro"/>
</dbReference>
<dbReference type="GO" id="GO:0044550">
    <property type="term" value="P:secondary metabolite biosynthetic process"/>
    <property type="evidence" value="ECO:0007669"/>
    <property type="project" value="UniProtKB-ARBA"/>
</dbReference>
<dbReference type="CDD" id="cd05930">
    <property type="entry name" value="A_NRPS"/>
    <property type="match status" value="1"/>
</dbReference>
<dbReference type="CDD" id="cd19532">
    <property type="entry name" value="C_PKS-NRPS"/>
    <property type="match status" value="1"/>
</dbReference>
<dbReference type="CDD" id="cd00833">
    <property type="entry name" value="PKS"/>
    <property type="match status" value="1"/>
</dbReference>
<dbReference type="Gene3D" id="3.30.300.30">
    <property type="match status" value="1"/>
</dbReference>
<dbReference type="Gene3D" id="3.30.70.3290">
    <property type="match status" value="1"/>
</dbReference>
<dbReference type="Gene3D" id="3.40.47.10">
    <property type="match status" value="1"/>
</dbReference>
<dbReference type="Gene3D" id="1.10.1200.10">
    <property type="entry name" value="ACP-like"/>
    <property type="match status" value="2"/>
</dbReference>
<dbReference type="Gene3D" id="3.30.559.10">
    <property type="entry name" value="Chloramphenicol acetyltransferase-like domain"/>
    <property type="match status" value="1"/>
</dbReference>
<dbReference type="Gene3D" id="3.40.366.10">
    <property type="entry name" value="Malonyl-Coenzyme A Acyl Carrier Protein, domain 2"/>
    <property type="match status" value="1"/>
</dbReference>
<dbReference type="Gene3D" id="3.40.50.12780">
    <property type="entry name" value="N-terminal domain of ligase-like"/>
    <property type="match status" value="1"/>
</dbReference>
<dbReference type="Gene3D" id="3.40.50.720">
    <property type="entry name" value="NAD(P)-binding Rossmann-like Domain"/>
    <property type="match status" value="3"/>
</dbReference>
<dbReference type="Gene3D" id="3.30.559.30">
    <property type="entry name" value="Nonribosomal peptide synthetase, condensation domain"/>
    <property type="match status" value="1"/>
</dbReference>
<dbReference type="Gene3D" id="3.10.129.110">
    <property type="entry name" value="Polyketide synthase dehydratase"/>
    <property type="match status" value="1"/>
</dbReference>
<dbReference type="Gene3D" id="3.40.50.150">
    <property type="entry name" value="Vaccinia Virus protein VP39"/>
    <property type="match status" value="1"/>
</dbReference>
<dbReference type="InterPro" id="IPR001227">
    <property type="entry name" value="Ac_transferase_dom_sf"/>
</dbReference>
<dbReference type="InterPro" id="IPR036736">
    <property type="entry name" value="ACP-like_sf"/>
</dbReference>
<dbReference type="InterPro" id="IPR014043">
    <property type="entry name" value="Acyl_transferase_dom"/>
</dbReference>
<dbReference type="InterPro" id="IPR016035">
    <property type="entry name" value="Acyl_Trfase/lysoPLipase"/>
</dbReference>
<dbReference type="InterPro" id="IPR045851">
    <property type="entry name" value="AMP-bd_C_sf"/>
</dbReference>
<dbReference type="InterPro" id="IPR020845">
    <property type="entry name" value="AMP-binding_CS"/>
</dbReference>
<dbReference type="InterPro" id="IPR000873">
    <property type="entry name" value="AMP-dep_synth/lig_dom"/>
</dbReference>
<dbReference type="InterPro" id="IPR042099">
    <property type="entry name" value="ANL_N_sf"/>
</dbReference>
<dbReference type="InterPro" id="IPR023213">
    <property type="entry name" value="CAT-like_dom_sf"/>
</dbReference>
<dbReference type="InterPro" id="IPR001242">
    <property type="entry name" value="Condensatn"/>
</dbReference>
<dbReference type="InterPro" id="IPR013120">
    <property type="entry name" value="Far_NAD-bd"/>
</dbReference>
<dbReference type="InterPro" id="IPR018201">
    <property type="entry name" value="Ketoacyl_synth_AS"/>
</dbReference>
<dbReference type="InterPro" id="IPR014031">
    <property type="entry name" value="Ketoacyl_synth_C"/>
</dbReference>
<dbReference type="InterPro" id="IPR014030">
    <property type="entry name" value="Ketoacyl_synth_N"/>
</dbReference>
<dbReference type="InterPro" id="IPR016036">
    <property type="entry name" value="Malonyl_transacylase_ACP-bd"/>
</dbReference>
<dbReference type="InterPro" id="IPR036291">
    <property type="entry name" value="NAD(P)-bd_dom_sf"/>
</dbReference>
<dbReference type="InterPro" id="IPR056501">
    <property type="entry name" value="NAD-bd_HRPKS_sdrA"/>
</dbReference>
<dbReference type="InterPro" id="IPR020841">
    <property type="entry name" value="PKS_Beta-ketoAc_synthase_dom"/>
</dbReference>
<dbReference type="InterPro" id="IPR042104">
    <property type="entry name" value="PKS_dehydratase_sf"/>
</dbReference>
<dbReference type="InterPro" id="IPR020807">
    <property type="entry name" value="PKS_DH"/>
</dbReference>
<dbReference type="InterPro" id="IPR049551">
    <property type="entry name" value="PKS_DH_C"/>
</dbReference>
<dbReference type="InterPro" id="IPR049552">
    <property type="entry name" value="PKS_DH_N"/>
</dbReference>
<dbReference type="InterPro" id="IPR013968">
    <property type="entry name" value="PKS_KR"/>
</dbReference>
<dbReference type="InterPro" id="IPR049900">
    <property type="entry name" value="PKS_mFAS_DH"/>
</dbReference>
<dbReference type="InterPro" id="IPR050091">
    <property type="entry name" value="PKS_NRPS_Biosynth_Enz"/>
</dbReference>
<dbReference type="InterPro" id="IPR020806">
    <property type="entry name" value="PKS_PP-bd"/>
</dbReference>
<dbReference type="InterPro" id="IPR009081">
    <property type="entry name" value="PP-bd_ACP"/>
</dbReference>
<dbReference type="InterPro" id="IPR029063">
    <property type="entry name" value="SAM-dependent_MTases_sf"/>
</dbReference>
<dbReference type="InterPro" id="IPR016039">
    <property type="entry name" value="Thiolase-like"/>
</dbReference>
<dbReference type="PANTHER" id="PTHR43775">
    <property type="entry name" value="FATTY ACID SYNTHASE"/>
    <property type="match status" value="1"/>
</dbReference>
<dbReference type="PANTHER" id="PTHR43775:SF37">
    <property type="entry name" value="SI:DKEY-61P9.11"/>
    <property type="match status" value="1"/>
</dbReference>
<dbReference type="Pfam" id="PF23297">
    <property type="entry name" value="ACP_SdgA_C"/>
    <property type="match status" value="1"/>
</dbReference>
<dbReference type="Pfam" id="PF00698">
    <property type="entry name" value="Acyl_transf_1"/>
    <property type="match status" value="1"/>
</dbReference>
<dbReference type="Pfam" id="PF00501">
    <property type="entry name" value="AMP-binding"/>
    <property type="match status" value="1"/>
</dbReference>
<dbReference type="Pfam" id="PF00668">
    <property type="entry name" value="Condensation"/>
    <property type="match status" value="1"/>
</dbReference>
<dbReference type="Pfam" id="PF22621">
    <property type="entry name" value="CurL-like_PKS_C"/>
    <property type="match status" value="1"/>
</dbReference>
<dbReference type="Pfam" id="PF00109">
    <property type="entry name" value="ketoacyl-synt"/>
    <property type="match status" value="1"/>
</dbReference>
<dbReference type="Pfam" id="PF02801">
    <property type="entry name" value="Ketoacyl-synt_C"/>
    <property type="match status" value="1"/>
</dbReference>
<dbReference type="Pfam" id="PF08659">
    <property type="entry name" value="KR"/>
    <property type="match status" value="1"/>
</dbReference>
<dbReference type="Pfam" id="PF23114">
    <property type="entry name" value="NAD-bd_HRPKS_sdrA"/>
    <property type="match status" value="1"/>
</dbReference>
<dbReference type="Pfam" id="PF07993">
    <property type="entry name" value="NAD_binding_4"/>
    <property type="match status" value="1"/>
</dbReference>
<dbReference type="Pfam" id="PF21089">
    <property type="entry name" value="PKS_DH_N"/>
    <property type="match status" value="1"/>
</dbReference>
<dbReference type="Pfam" id="PF00550">
    <property type="entry name" value="PP-binding"/>
    <property type="match status" value="1"/>
</dbReference>
<dbReference type="Pfam" id="PF14765">
    <property type="entry name" value="PS-DH"/>
    <property type="match status" value="1"/>
</dbReference>
<dbReference type="SMART" id="SM00827">
    <property type="entry name" value="PKS_AT"/>
    <property type="match status" value="1"/>
</dbReference>
<dbReference type="SMART" id="SM00826">
    <property type="entry name" value="PKS_DH"/>
    <property type="match status" value="1"/>
</dbReference>
<dbReference type="SMART" id="SM00822">
    <property type="entry name" value="PKS_KR"/>
    <property type="match status" value="1"/>
</dbReference>
<dbReference type="SMART" id="SM00825">
    <property type="entry name" value="PKS_KS"/>
    <property type="match status" value="1"/>
</dbReference>
<dbReference type="SMART" id="SM00823">
    <property type="entry name" value="PKS_PP"/>
    <property type="match status" value="2"/>
</dbReference>
<dbReference type="SUPFAM" id="SSF56801">
    <property type="entry name" value="Acetyl-CoA synthetase-like"/>
    <property type="match status" value="1"/>
</dbReference>
<dbReference type="SUPFAM" id="SSF47336">
    <property type="entry name" value="ACP-like"/>
    <property type="match status" value="2"/>
</dbReference>
<dbReference type="SUPFAM" id="SSF52777">
    <property type="entry name" value="CoA-dependent acyltransferases"/>
    <property type="match status" value="2"/>
</dbReference>
<dbReference type="SUPFAM" id="SSF52151">
    <property type="entry name" value="FabD/lysophospholipase-like"/>
    <property type="match status" value="1"/>
</dbReference>
<dbReference type="SUPFAM" id="SSF51735">
    <property type="entry name" value="NAD(P)-binding Rossmann-fold domains"/>
    <property type="match status" value="2"/>
</dbReference>
<dbReference type="SUPFAM" id="SSF55048">
    <property type="entry name" value="Probable ACP-binding domain of malonyl-CoA ACP transacylase"/>
    <property type="match status" value="1"/>
</dbReference>
<dbReference type="SUPFAM" id="SSF53335">
    <property type="entry name" value="S-adenosyl-L-methionine-dependent methyltransferases"/>
    <property type="match status" value="1"/>
</dbReference>
<dbReference type="SUPFAM" id="SSF53901">
    <property type="entry name" value="Thiolase-like"/>
    <property type="match status" value="1"/>
</dbReference>
<dbReference type="PROSITE" id="PS00061">
    <property type="entry name" value="ADH_SHORT"/>
    <property type="match status" value="1"/>
</dbReference>
<dbReference type="PROSITE" id="PS00455">
    <property type="entry name" value="AMP_BINDING"/>
    <property type="match status" value="1"/>
</dbReference>
<dbReference type="PROSITE" id="PS50075">
    <property type="entry name" value="CARRIER"/>
    <property type="match status" value="2"/>
</dbReference>
<dbReference type="PROSITE" id="PS00606">
    <property type="entry name" value="KS3_1"/>
    <property type="match status" value="1"/>
</dbReference>
<dbReference type="PROSITE" id="PS52004">
    <property type="entry name" value="KS3_2"/>
    <property type="match status" value="1"/>
</dbReference>
<dbReference type="PROSITE" id="PS52019">
    <property type="entry name" value="PKS_MFAS_DH"/>
    <property type="match status" value="1"/>
</dbReference>
<comment type="function">
    <text evidence="6 7 10">Polyketide synthase-nonribosomal peptide synthetase hybrid; part of the him gene cluster that mediates the biosynthesis of himeic acid A, a ubiquitin-activating enzyme (E1) inhibitor (PubMed:29314577). First, himA, together with the trans-enoyl reductase himH, catalyzes the formation of apolyketide chain, which is then condensed with leucine by the NRPS activity of himA. Dieckmann cyclization and release from himA gives a tetramic acid intermediate as the product of himA PKS-NRPS (PubMed:29314577). HimG then catalyzes alpha-oxidation of the tetramic acid ring, with a subsequent rearrangement to yield apyrone intermediate (Probable). Two terminal methyl groups of polyketide and amide side chains are oxidized to carboxylic acids by himC cytochrome P450 monooxygenase to form himeic acid A (Probable). Himeic acid A is further converted to himeic acids B and C during culture growth. No gene responsible for pyrone to pyridone conversion was found in the him gene cluster and himeic acid A is non-enzymatically converted to himeic acid C by the incorporation of an ammonium nitrogen atom in a pH5 buffer, and to himeic acid B at a conversion ratio of 50% during incubation in MeOH for 5 days (PubMed:29486950).</text>
</comment>
<comment type="pathway">
    <text evidence="6">Secondary metabolite biosynthesis.</text>
</comment>
<comment type="domain">
    <text evidence="10">The PKS-NRPS himA consists of nine catalytic domains including a ketoacyl synthase domain (KS), an acyl transferase domain (AT), a dehydratase domain (DH), a ketoreductase domain (KR), an acyl carrier protein (ACP) domains, a condensation (C) domain, an adenylation (A) domain, a thiolation (T) domain, and a releasing or Dieckmann cyclization (R/D) domain. Because himA lacks a designated enoyl reductase (ER) domain, the required ER activity is likely to be provided by the free-standing ER himH.</text>
</comment>
<comment type="disruption phenotype">
    <text evidence="6">Completely abolishes the production of himeic acid A.</text>
</comment>
<comment type="similarity">
    <text evidence="9">In the C-terminal section; belongs to the NRP synthetase family.</text>
</comment>
<name>HIMA_ASPJA</name>